<name>O1615_CONVE</name>
<protein>
    <recommendedName>
        <fullName>Conotoxin VnMKLT2-0221</fullName>
    </recommendedName>
</protein>
<accession>Q9BP96</accession>
<feature type="signal peptide" evidence="2">
    <location>
        <begin position="1"/>
        <end position="22"/>
    </location>
</feature>
<feature type="propeptide" id="PRO_0000404746" evidence="1">
    <location>
        <begin position="23"/>
        <end position="45"/>
    </location>
</feature>
<feature type="peptide" id="PRO_0000404747" description="Conotoxin VnMKLT2-0221">
    <location>
        <begin position="48"/>
        <end position="72"/>
    </location>
</feature>
<feature type="region of interest" description="Disordered" evidence="3">
    <location>
        <begin position="26"/>
        <end position="45"/>
    </location>
</feature>
<feature type="disulfide bond" evidence="1">
    <location>
        <begin position="48"/>
        <end position="62"/>
    </location>
</feature>
<feature type="disulfide bond" evidence="1">
    <location>
        <begin position="55"/>
        <end position="66"/>
    </location>
</feature>
<feature type="disulfide bond" evidence="1">
    <location>
        <begin position="61"/>
        <end position="71"/>
    </location>
</feature>
<organism>
    <name type="scientific">Conus ventricosus</name>
    <name type="common">Mediterranean cone</name>
    <dbReference type="NCBI Taxonomy" id="117992"/>
    <lineage>
        <taxon>Eukaryota</taxon>
        <taxon>Metazoa</taxon>
        <taxon>Spiralia</taxon>
        <taxon>Lophotrochozoa</taxon>
        <taxon>Mollusca</taxon>
        <taxon>Gastropoda</taxon>
        <taxon>Caenogastropoda</taxon>
        <taxon>Neogastropoda</taxon>
        <taxon>Conoidea</taxon>
        <taxon>Conidae</taxon>
        <taxon>Conus</taxon>
        <taxon>Lautoconus</taxon>
    </lineage>
</organism>
<proteinExistence type="evidence at transcript level"/>
<evidence type="ECO:0000250" key="1"/>
<evidence type="ECO:0000255" key="2"/>
<evidence type="ECO:0000256" key="3">
    <source>
        <dbReference type="SAM" id="MobiDB-lite"/>
    </source>
</evidence>
<evidence type="ECO:0000305" key="4"/>
<keyword id="KW-0165">Cleavage on pair of basic residues</keyword>
<keyword id="KW-1015">Disulfide bond</keyword>
<keyword id="KW-0960">Knottin</keyword>
<keyword id="KW-0528">Neurotoxin</keyword>
<keyword id="KW-0964">Secreted</keyword>
<keyword id="KW-0732">Signal</keyword>
<keyword id="KW-0800">Toxin</keyword>
<reference key="1">
    <citation type="journal article" date="2001" name="Mol. Biol. Evol.">
        <title>Mechanisms for evolving hypervariability: the case of conopeptides.</title>
        <authorList>
            <person name="Conticello S.G."/>
            <person name="Gilad Y."/>
            <person name="Avidan N."/>
            <person name="Ben-Asher E."/>
            <person name="Levy Z."/>
            <person name="Fainzilber M."/>
        </authorList>
    </citation>
    <scope>NUCLEOTIDE SEQUENCE [MRNA]</scope>
    <source>
        <tissue>Venom duct</tissue>
    </source>
</reference>
<dbReference type="EMBL" id="AF215042">
    <property type="protein sequence ID" value="AAG60470.1"/>
    <property type="molecule type" value="mRNA"/>
</dbReference>
<dbReference type="SMR" id="Q9BP96"/>
<dbReference type="ConoServer" id="729">
    <property type="toxin name" value="Vn6.15 precursor"/>
</dbReference>
<dbReference type="GO" id="GO:0005576">
    <property type="term" value="C:extracellular region"/>
    <property type="evidence" value="ECO:0007669"/>
    <property type="project" value="UniProtKB-SubCell"/>
</dbReference>
<dbReference type="GO" id="GO:0008200">
    <property type="term" value="F:ion channel inhibitor activity"/>
    <property type="evidence" value="ECO:0007669"/>
    <property type="project" value="InterPro"/>
</dbReference>
<dbReference type="GO" id="GO:0090729">
    <property type="term" value="F:toxin activity"/>
    <property type="evidence" value="ECO:0007669"/>
    <property type="project" value="UniProtKB-KW"/>
</dbReference>
<dbReference type="InterPro" id="IPR004214">
    <property type="entry name" value="Conotoxin"/>
</dbReference>
<dbReference type="Pfam" id="PF02950">
    <property type="entry name" value="Conotoxin"/>
    <property type="match status" value="1"/>
</dbReference>
<comment type="subcellular location">
    <subcellularLocation>
        <location evidence="1">Secreted</location>
    </subcellularLocation>
</comment>
<comment type="tissue specificity">
    <text>Expressed by the venom duct.</text>
</comment>
<comment type="domain">
    <text evidence="1">The presence of a 'disulfide through disulfide knot' structurally defines this protein as a knottin.</text>
</comment>
<comment type="domain">
    <text>The cysteine framework is VI/VII (C-C-CC-C-C).</text>
</comment>
<comment type="similarity">
    <text evidence="4">Belongs to the conotoxin O1 superfamily.</text>
</comment>
<sequence length="72" mass="7816">MKLTCVLIVAVLFLTACQLTTAASYARSERQHPDLGSSDQNSKLTKRCLGSGETCWLDSSCCSFSCTNNVCF</sequence>